<protein>
    <recommendedName>
        <fullName evidence="1">Large ribosomal subunit protein uL5</fullName>
    </recommendedName>
    <alternativeName>
        <fullName evidence="2">50S ribosomal protein L5</fullName>
    </alternativeName>
</protein>
<feature type="chain" id="PRO_1000086604" description="Large ribosomal subunit protein uL5">
    <location>
        <begin position="1"/>
        <end position="179"/>
    </location>
</feature>
<accession>A9MN60</accession>
<dbReference type="EMBL" id="CP000880">
    <property type="protein sequence ID" value="ABX23990.1"/>
    <property type="molecule type" value="Genomic_DNA"/>
</dbReference>
<dbReference type="SMR" id="A9MN60"/>
<dbReference type="STRING" id="41514.SARI_04201"/>
<dbReference type="KEGG" id="ses:SARI_04201"/>
<dbReference type="HOGENOM" id="CLU_061015_2_1_6"/>
<dbReference type="Proteomes" id="UP000002084">
    <property type="component" value="Chromosome"/>
</dbReference>
<dbReference type="GO" id="GO:1990904">
    <property type="term" value="C:ribonucleoprotein complex"/>
    <property type="evidence" value="ECO:0007669"/>
    <property type="project" value="UniProtKB-KW"/>
</dbReference>
<dbReference type="GO" id="GO:0005840">
    <property type="term" value="C:ribosome"/>
    <property type="evidence" value="ECO:0007669"/>
    <property type="project" value="UniProtKB-KW"/>
</dbReference>
<dbReference type="GO" id="GO:0019843">
    <property type="term" value="F:rRNA binding"/>
    <property type="evidence" value="ECO:0007669"/>
    <property type="project" value="UniProtKB-UniRule"/>
</dbReference>
<dbReference type="GO" id="GO:0003735">
    <property type="term" value="F:structural constituent of ribosome"/>
    <property type="evidence" value="ECO:0007669"/>
    <property type="project" value="InterPro"/>
</dbReference>
<dbReference type="GO" id="GO:0000049">
    <property type="term" value="F:tRNA binding"/>
    <property type="evidence" value="ECO:0007669"/>
    <property type="project" value="UniProtKB-UniRule"/>
</dbReference>
<dbReference type="GO" id="GO:0006412">
    <property type="term" value="P:translation"/>
    <property type="evidence" value="ECO:0007669"/>
    <property type="project" value="UniProtKB-UniRule"/>
</dbReference>
<dbReference type="FunFam" id="3.30.1440.10:FF:000001">
    <property type="entry name" value="50S ribosomal protein L5"/>
    <property type="match status" value="1"/>
</dbReference>
<dbReference type="Gene3D" id="3.30.1440.10">
    <property type="match status" value="1"/>
</dbReference>
<dbReference type="HAMAP" id="MF_01333_B">
    <property type="entry name" value="Ribosomal_uL5_B"/>
    <property type="match status" value="1"/>
</dbReference>
<dbReference type="InterPro" id="IPR002132">
    <property type="entry name" value="Ribosomal_uL5"/>
</dbReference>
<dbReference type="InterPro" id="IPR020930">
    <property type="entry name" value="Ribosomal_uL5_bac-type"/>
</dbReference>
<dbReference type="InterPro" id="IPR031309">
    <property type="entry name" value="Ribosomal_uL5_C"/>
</dbReference>
<dbReference type="InterPro" id="IPR020929">
    <property type="entry name" value="Ribosomal_uL5_CS"/>
</dbReference>
<dbReference type="InterPro" id="IPR022803">
    <property type="entry name" value="Ribosomal_uL5_dom_sf"/>
</dbReference>
<dbReference type="InterPro" id="IPR031310">
    <property type="entry name" value="Ribosomal_uL5_N"/>
</dbReference>
<dbReference type="NCBIfam" id="NF000585">
    <property type="entry name" value="PRK00010.1"/>
    <property type="match status" value="1"/>
</dbReference>
<dbReference type="PANTHER" id="PTHR11994">
    <property type="entry name" value="60S RIBOSOMAL PROTEIN L11-RELATED"/>
    <property type="match status" value="1"/>
</dbReference>
<dbReference type="Pfam" id="PF00281">
    <property type="entry name" value="Ribosomal_L5"/>
    <property type="match status" value="1"/>
</dbReference>
<dbReference type="Pfam" id="PF00673">
    <property type="entry name" value="Ribosomal_L5_C"/>
    <property type="match status" value="1"/>
</dbReference>
<dbReference type="PIRSF" id="PIRSF002161">
    <property type="entry name" value="Ribosomal_L5"/>
    <property type="match status" value="1"/>
</dbReference>
<dbReference type="SUPFAM" id="SSF55282">
    <property type="entry name" value="RL5-like"/>
    <property type="match status" value="1"/>
</dbReference>
<dbReference type="PROSITE" id="PS00358">
    <property type="entry name" value="RIBOSOMAL_L5"/>
    <property type="match status" value="1"/>
</dbReference>
<comment type="function">
    <text evidence="1">This is one of the proteins that bind and probably mediate the attachment of the 5S RNA into the large ribosomal subunit, where it forms part of the central protuberance. In the 70S ribosome it contacts protein S13 of the 30S subunit (bridge B1b), connecting the 2 subunits; this bridge is implicated in subunit movement. Contacts the P site tRNA; the 5S rRNA and some of its associated proteins might help stabilize positioning of ribosome-bound tRNAs.</text>
</comment>
<comment type="subunit">
    <text evidence="1">Part of the 50S ribosomal subunit; part of the 5S rRNA/L5/L18/L25 subcomplex. Contacts the 5S rRNA and the P site tRNA. Forms a bridge to the 30S subunit in the 70S ribosome.</text>
</comment>
<comment type="similarity">
    <text evidence="1">Belongs to the universal ribosomal protein uL5 family.</text>
</comment>
<name>RL5_SALAR</name>
<reference key="1">
    <citation type="submission" date="2007-11" db="EMBL/GenBank/DDBJ databases">
        <authorList>
            <consortium name="The Salmonella enterica serovar Arizonae Genome Sequencing Project"/>
            <person name="McClelland M."/>
            <person name="Sanderson E.K."/>
            <person name="Porwollik S."/>
            <person name="Spieth J."/>
            <person name="Clifton W.S."/>
            <person name="Fulton R."/>
            <person name="Chunyan W."/>
            <person name="Wollam A."/>
            <person name="Shah N."/>
            <person name="Pepin K."/>
            <person name="Bhonagiri V."/>
            <person name="Nash W."/>
            <person name="Johnson M."/>
            <person name="Thiruvilangam P."/>
            <person name="Wilson R."/>
        </authorList>
    </citation>
    <scope>NUCLEOTIDE SEQUENCE [LARGE SCALE GENOMIC DNA]</scope>
    <source>
        <strain>ATCC BAA-731 / CDC346-86 / RSK2980</strain>
    </source>
</reference>
<evidence type="ECO:0000255" key="1">
    <source>
        <dbReference type="HAMAP-Rule" id="MF_01333"/>
    </source>
</evidence>
<evidence type="ECO:0000305" key="2"/>
<proteinExistence type="inferred from homology"/>
<organism>
    <name type="scientific">Salmonella arizonae (strain ATCC BAA-731 / CDC346-86 / RSK2980)</name>
    <dbReference type="NCBI Taxonomy" id="41514"/>
    <lineage>
        <taxon>Bacteria</taxon>
        <taxon>Pseudomonadati</taxon>
        <taxon>Pseudomonadota</taxon>
        <taxon>Gammaproteobacteria</taxon>
        <taxon>Enterobacterales</taxon>
        <taxon>Enterobacteriaceae</taxon>
        <taxon>Salmonella</taxon>
    </lineage>
</organism>
<keyword id="KW-1185">Reference proteome</keyword>
<keyword id="KW-0687">Ribonucleoprotein</keyword>
<keyword id="KW-0689">Ribosomal protein</keyword>
<keyword id="KW-0694">RNA-binding</keyword>
<keyword id="KW-0699">rRNA-binding</keyword>
<keyword id="KW-0820">tRNA-binding</keyword>
<gene>
    <name evidence="1" type="primary">rplE</name>
    <name type="ordered locus">SARI_04201</name>
</gene>
<sequence length="179" mass="20332">MAKLHDYYKDEVVKKLMTEFNYNSVMQVPRVEKITLNMGVGEAIADKKLLDNAAADLTAISGQKPLITKARKSVAGFKIRQGYPIGCKVTLRGERMWEFFERLITIAVPRIRDFRGLSAKSFDGRGNYSMGVREQIIFPEIDYDKVDRVRGLDITITTTAKSDEEGRALLAAFDFPFRK</sequence>